<gene>
    <name evidence="1" type="primary">gcvH</name>
    <name type="ordered locus">PsycPRwf_1723</name>
</gene>
<sequence>MSNVPSELKYVASHEWLRLEDDGTVTVGITDHAQEALGDIVYVELPDVGDTVAVDDEVAVVESVKAASDVYAPLTGEVVAINEALEDDPEVINTDPYGEGWMYRIKPDNADDFESLLSAEEYQAEL</sequence>
<keyword id="KW-0450">Lipoyl</keyword>
<evidence type="ECO:0000255" key="1">
    <source>
        <dbReference type="HAMAP-Rule" id="MF_00272"/>
    </source>
</evidence>
<evidence type="ECO:0000255" key="2">
    <source>
        <dbReference type="PROSITE-ProRule" id="PRU01066"/>
    </source>
</evidence>
<protein>
    <recommendedName>
        <fullName evidence="1">Glycine cleavage system H protein</fullName>
    </recommendedName>
</protein>
<feature type="chain" id="PRO_1000071905" description="Glycine cleavage system H protein">
    <location>
        <begin position="1"/>
        <end position="126"/>
    </location>
</feature>
<feature type="domain" description="Lipoyl-binding" evidence="2">
    <location>
        <begin position="24"/>
        <end position="106"/>
    </location>
</feature>
<feature type="modified residue" description="N6-lipoyllysine" evidence="1">
    <location>
        <position position="65"/>
    </location>
</feature>
<proteinExistence type="inferred from homology"/>
<comment type="function">
    <text evidence="1">The glycine cleavage system catalyzes the degradation of glycine. The H protein shuttles the methylamine group of glycine from the P protein to the T protein.</text>
</comment>
<comment type="cofactor">
    <cofactor evidence="1">
        <name>(R)-lipoate</name>
        <dbReference type="ChEBI" id="CHEBI:83088"/>
    </cofactor>
    <text evidence="1">Binds 1 lipoyl cofactor covalently.</text>
</comment>
<comment type="subunit">
    <text evidence="1">The glycine cleavage system is composed of four proteins: P, T, L and H.</text>
</comment>
<comment type="similarity">
    <text evidence="1">Belongs to the GcvH family.</text>
</comment>
<organism>
    <name type="scientific">Psychrobacter sp. (strain PRwf-1)</name>
    <dbReference type="NCBI Taxonomy" id="349106"/>
    <lineage>
        <taxon>Bacteria</taxon>
        <taxon>Pseudomonadati</taxon>
        <taxon>Pseudomonadota</taxon>
        <taxon>Gammaproteobacteria</taxon>
        <taxon>Moraxellales</taxon>
        <taxon>Moraxellaceae</taxon>
        <taxon>Psychrobacter</taxon>
    </lineage>
</organism>
<name>GCSH_PSYWF</name>
<accession>A5WG72</accession>
<dbReference type="EMBL" id="CP000713">
    <property type="protein sequence ID" value="ABQ94663.1"/>
    <property type="molecule type" value="Genomic_DNA"/>
</dbReference>
<dbReference type="SMR" id="A5WG72"/>
<dbReference type="STRING" id="349106.PsycPRwf_1723"/>
<dbReference type="KEGG" id="prw:PsycPRwf_1723"/>
<dbReference type="eggNOG" id="COG0509">
    <property type="taxonomic scope" value="Bacteria"/>
</dbReference>
<dbReference type="HOGENOM" id="CLU_097408_2_1_6"/>
<dbReference type="GO" id="GO:0005829">
    <property type="term" value="C:cytosol"/>
    <property type="evidence" value="ECO:0007669"/>
    <property type="project" value="TreeGrafter"/>
</dbReference>
<dbReference type="GO" id="GO:0005960">
    <property type="term" value="C:glycine cleavage complex"/>
    <property type="evidence" value="ECO:0007669"/>
    <property type="project" value="InterPro"/>
</dbReference>
<dbReference type="GO" id="GO:0019464">
    <property type="term" value="P:glycine decarboxylation via glycine cleavage system"/>
    <property type="evidence" value="ECO:0007669"/>
    <property type="project" value="UniProtKB-UniRule"/>
</dbReference>
<dbReference type="CDD" id="cd06848">
    <property type="entry name" value="GCS_H"/>
    <property type="match status" value="1"/>
</dbReference>
<dbReference type="Gene3D" id="2.40.50.100">
    <property type="match status" value="1"/>
</dbReference>
<dbReference type="HAMAP" id="MF_00272">
    <property type="entry name" value="GcvH"/>
    <property type="match status" value="1"/>
</dbReference>
<dbReference type="InterPro" id="IPR003016">
    <property type="entry name" value="2-oxoA_DH_lipoyl-BS"/>
</dbReference>
<dbReference type="InterPro" id="IPR000089">
    <property type="entry name" value="Biotin_lipoyl"/>
</dbReference>
<dbReference type="InterPro" id="IPR002930">
    <property type="entry name" value="GCV_H"/>
</dbReference>
<dbReference type="InterPro" id="IPR033753">
    <property type="entry name" value="GCV_H/Fam206"/>
</dbReference>
<dbReference type="InterPro" id="IPR017453">
    <property type="entry name" value="GCV_H_sub"/>
</dbReference>
<dbReference type="InterPro" id="IPR011053">
    <property type="entry name" value="Single_hybrid_motif"/>
</dbReference>
<dbReference type="NCBIfam" id="TIGR00527">
    <property type="entry name" value="gcvH"/>
    <property type="match status" value="1"/>
</dbReference>
<dbReference type="NCBIfam" id="NF002270">
    <property type="entry name" value="PRK01202.1"/>
    <property type="match status" value="1"/>
</dbReference>
<dbReference type="PANTHER" id="PTHR11715">
    <property type="entry name" value="GLYCINE CLEAVAGE SYSTEM H PROTEIN"/>
    <property type="match status" value="1"/>
</dbReference>
<dbReference type="PANTHER" id="PTHR11715:SF3">
    <property type="entry name" value="GLYCINE CLEAVAGE SYSTEM H PROTEIN-RELATED"/>
    <property type="match status" value="1"/>
</dbReference>
<dbReference type="Pfam" id="PF01597">
    <property type="entry name" value="GCV_H"/>
    <property type="match status" value="1"/>
</dbReference>
<dbReference type="SUPFAM" id="SSF51230">
    <property type="entry name" value="Single hybrid motif"/>
    <property type="match status" value="1"/>
</dbReference>
<dbReference type="PROSITE" id="PS50968">
    <property type="entry name" value="BIOTINYL_LIPOYL"/>
    <property type="match status" value="1"/>
</dbReference>
<dbReference type="PROSITE" id="PS00189">
    <property type="entry name" value="LIPOYL"/>
    <property type="match status" value="1"/>
</dbReference>
<reference key="1">
    <citation type="submission" date="2007-05" db="EMBL/GenBank/DDBJ databases">
        <title>Complete sequence of chromosome of Psychrobacter sp. PRwf-1.</title>
        <authorList>
            <consortium name="US DOE Joint Genome Institute"/>
            <person name="Copeland A."/>
            <person name="Lucas S."/>
            <person name="Lapidus A."/>
            <person name="Barry K."/>
            <person name="Detter J.C."/>
            <person name="Glavina del Rio T."/>
            <person name="Hammon N."/>
            <person name="Israni S."/>
            <person name="Dalin E."/>
            <person name="Tice H."/>
            <person name="Pitluck S."/>
            <person name="Chain P."/>
            <person name="Malfatti S."/>
            <person name="Shin M."/>
            <person name="Vergez L."/>
            <person name="Schmutz J."/>
            <person name="Larimer F."/>
            <person name="Land M."/>
            <person name="Hauser L."/>
            <person name="Kyrpides N."/>
            <person name="Kim E."/>
            <person name="Tiedje J."/>
            <person name="Richardson P."/>
        </authorList>
    </citation>
    <scope>NUCLEOTIDE SEQUENCE [LARGE SCALE GENOMIC DNA]</scope>
    <source>
        <strain>PRwf-1</strain>
    </source>
</reference>